<organism>
    <name type="scientific">Prochlorococcus marinus (strain SARG / CCMP1375 / SS120)</name>
    <dbReference type="NCBI Taxonomy" id="167539"/>
    <lineage>
        <taxon>Bacteria</taxon>
        <taxon>Bacillati</taxon>
        <taxon>Cyanobacteriota</taxon>
        <taxon>Cyanophyceae</taxon>
        <taxon>Synechococcales</taxon>
        <taxon>Prochlorococcaceae</taxon>
        <taxon>Prochlorococcus</taxon>
    </lineage>
</organism>
<accession>O87787</accession>
<feature type="chain" id="PRO_0000194697" description="Photosystem I reaction center subunit XI">
    <location>
        <begin position="1"/>
        <end position="199"/>
    </location>
</feature>
<feature type="transmembrane region" description="Helical" evidence="2">
    <location>
        <begin position="81"/>
        <end position="101"/>
    </location>
</feature>
<feature type="transmembrane region" description="Helical" evidence="2">
    <location>
        <begin position="108"/>
        <end position="128"/>
    </location>
</feature>
<feature type="transmembrane region" description="Helical" evidence="2">
    <location>
        <begin position="165"/>
        <end position="185"/>
    </location>
</feature>
<gene>
    <name type="primary">psaL</name>
    <name type="ordered locus">Pro_1679</name>
</gene>
<name>PSAL_PROMA</name>
<reference key="1">
    <citation type="journal article" date="1998" name="Photosyn. Res.">
        <title>Characterization of the photosystem I subunits PsaI and PsaL from two strains of the marine oxyphototrophic.</title>
        <authorList>
            <person name="van der Staay G.W.M."/>
            <person name="Moon-van der Staay S.Y."/>
            <person name="Garczarek L."/>
            <person name="Partensky F."/>
        </authorList>
    </citation>
    <scope>NUCLEOTIDE SEQUENCE [GENOMIC DNA]</scope>
    <source>
        <strain>SARG / CCMP1375 / SS120</strain>
    </source>
</reference>
<reference key="2">
    <citation type="journal article" date="2003" name="Proc. Natl. Acad. Sci. U.S.A.">
        <title>Genome sequence of the cyanobacterium Prochlorococcus marinus SS120, a nearly minimal oxyphototrophic genome.</title>
        <authorList>
            <person name="Dufresne A."/>
            <person name="Salanoubat M."/>
            <person name="Partensky F."/>
            <person name="Artiguenave F."/>
            <person name="Axmann I.M."/>
            <person name="Barbe V."/>
            <person name="Duprat S."/>
            <person name="Galperin M.Y."/>
            <person name="Koonin E.V."/>
            <person name="Le Gall F."/>
            <person name="Makarova K.S."/>
            <person name="Ostrowski M."/>
            <person name="Oztas S."/>
            <person name="Robert C."/>
            <person name="Rogozin I.B."/>
            <person name="Scanlan D.J."/>
            <person name="Tandeau de Marsac N."/>
            <person name="Weissenbach J."/>
            <person name="Wincker P."/>
            <person name="Wolf Y.I."/>
            <person name="Hess W.R."/>
        </authorList>
    </citation>
    <scope>NUCLEOTIDE SEQUENCE [LARGE SCALE GENOMIC DNA]</scope>
    <source>
        <strain>SARG / CCMP1375 / SS120</strain>
    </source>
</reference>
<comment type="subcellular location">
    <subcellularLocation>
        <location evidence="1">Cellular thylakoid membrane</location>
        <topology evidence="1">Multi-pass membrane protein</topology>
    </subcellularLocation>
</comment>
<comment type="similarity">
    <text evidence="3">Belongs to the PsaL family.</text>
</comment>
<proteinExistence type="inferred from homology"/>
<sequence length="199" mass="21273">MTEFQDPFLKSSEPVKFNEKYVDSSVRPGDIGIVDQWAVTPVSDPCVGNLSTPVNSGYFTKAFLNNLPFYRGGLSPNFRGLEVGAAFGYLLYGPYAMTGPLRNTDYALTAGLLGTIGAVHILTALLVLYNAPGKAPNIQPSDCTINNPPADLFTRSGWADFTSGFWLGGCGGAVFAWLLCGTLHLDTIMPIVRGVWAAG</sequence>
<protein>
    <recommendedName>
        <fullName>Photosystem I reaction center subunit XI</fullName>
    </recommendedName>
    <alternativeName>
        <fullName>PSI subunit V</fullName>
    </alternativeName>
    <alternativeName>
        <fullName>PSI-L</fullName>
    </alternativeName>
</protein>
<keyword id="KW-0472">Membrane</keyword>
<keyword id="KW-0602">Photosynthesis</keyword>
<keyword id="KW-0603">Photosystem I</keyword>
<keyword id="KW-1185">Reference proteome</keyword>
<keyword id="KW-0793">Thylakoid</keyword>
<keyword id="KW-0812">Transmembrane</keyword>
<keyword id="KW-1133">Transmembrane helix</keyword>
<evidence type="ECO:0000250" key="1"/>
<evidence type="ECO:0000255" key="2"/>
<evidence type="ECO:0000305" key="3"/>
<dbReference type="EMBL" id="Z98594">
    <property type="protein sequence ID" value="CAB11179.1"/>
    <property type="molecule type" value="Genomic_DNA"/>
</dbReference>
<dbReference type="EMBL" id="AE017126">
    <property type="protein sequence ID" value="AAQ00723.1"/>
    <property type="molecule type" value="Genomic_DNA"/>
</dbReference>
<dbReference type="RefSeq" id="NP_876070.1">
    <property type="nucleotide sequence ID" value="NC_005042.1"/>
</dbReference>
<dbReference type="RefSeq" id="WP_011125828.1">
    <property type="nucleotide sequence ID" value="NC_005042.1"/>
</dbReference>
<dbReference type="SMR" id="O87787"/>
<dbReference type="STRING" id="167539.Pro_1679"/>
<dbReference type="EnsemblBacteria" id="AAQ00723">
    <property type="protein sequence ID" value="AAQ00723"/>
    <property type="gene ID" value="Pro_1679"/>
</dbReference>
<dbReference type="KEGG" id="pma:Pro_1679"/>
<dbReference type="PATRIC" id="fig|167539.5.peg.1773"/>
<dbReference type="eggNOG" id="ENOG5033UPE">
    <property type="taxonomic scope" value="Bacteria"/>
</dbReference>
<dbReference type="HOGENOM" id="CLU_092204_1_0_3"/>
<dbReference type="OrthoDB" id="464381at2"/>
<dbReference type="Proteomes" id="UP000001420">
    <property type="component" value="Chromosome"/>
</dbReference>
<dbReference type="GO" id="GO:0009538">
    <property type="term" value="C:photosystem I reaction center"/>
    <property type="evidence" value="ECO:0007669"/>
    <property type="project" value="InterPro"/>
</dbReference>
<dbReference type="GO" id="GO:0031676">
    <property type="term" value="C:plasma membrane-derived thylakoid membrane"/>
    <property type="evidence" value="ECO:0007669"/>
    <property type="project" value="UniProtKB-SubCell"/>
</dbReference>
<dbReference type="GO" id="GO:0015979">
    <property type="term" value="P:photosynthesis"/>
    <property type="evidence" value="ECO:0007669"/>
    <property type="project" value="UniProtKB-UniRule"/>
</dbReference>
<dbReference type="Gene3D" id="1.20.1240.10">
    <property type="entry name" value="Photosystem I PsaL, reaction centre subunit XI"/>
    <property type="match status" value="1"/>
</dbReference>
<dbReference type="HAMAP" id="MF_00447">
    <property type="entry name" value="PSI_PsaL"/>
    <property type="match status" value="1"/>
</dbReference>
<dbReference type="InterPro" id="IPR003757">
    <property type="entry name" value="PSI_PsaL"/>
</dbReference>
<dbReference type="InterPro" id="IPR036592">
    <property type="entry name" value="PSI_PsaL_sf"/>
</dbReference>
<dbReference type="InterPro" id="IPR022980">
    <property type="entry name" value="PSI_suXI"/>
</dbReference>
<dbReference type="NCBIfam" id="NF001925">
    <property type="entry name" value="PRK00704.1-1"/>
    <property type="match status" value="1"/>
</dbReference>
<dbReference type="NCBIfam" id="NF001928">
    <property type="entry name" value="PRK00704.1-5"/>
    <property type="match status" value="1"/>
</dbReference>
<dbReference type="PANTHER" id="PTHR34803">
    <property type="entry name" value="PHOTOSYSTEM I REACTION CENTER SUBUNIT XI, CHLOROPLASTIC"/>
    <property type="match status" value="1"/>
</dbReference>
<dbReference type="PANTHER" id="PTHR34803:SF2">
    <property type="entry name" value="PHOTOSYSTEM I REACTION CENTER SUBUNIT XI, CHLOROPLASTIC"/>
    <property type="match status" value="1"/>
</dbReference>
<dbReference type="Pfam" id="PF02605">
    <property type="entry name" value="PsaL"/>
    <property type="match status" value="1"/>
</dbReference>
<dbReference type="SUPFAM" id="SSF81568">
    <property type="entry name" value="Photosystem I reaction center subunit XI, PsaL"/>
    <property type="match status" value="1"/>
</dbReference>